<evidence type="ECO:0000255" key="1">
    <source>
        <dbReference type="HAMAP-Rule" id="MF_00066"/>
    </source>
</evidence>
<keyword id="KW-0067">ATP-binding</keyword>
<keyword id="KW-0547">Nucleotide-binding</keyword>
<keyword id="KW-0548">Nucleotidyltransferase</keyword>
<keyword id="KW-1185">Reference proteome</keyword>
<keyword id="KW-0808">Transferase</keyword>
<accession>Q8KE30</accession>
<proteinExistence type="inferred from homology"/>
<protein>
    <recommendedName>
        <fullName evidence="1">Sulfate adenylyltransferase</fullName>
        <ecNumber evidence="1">2.7.7.4</ecNumber>
    </recommendedName>
    <alternativeName>
        <fullName evidence="1">ATP-sulfurylase</fullName>
    </alternativeName>
    <alternativeName>
        <fullName evidence="1">Sulfate adenylate transferase</fullName>
        <shortName evidence="1">SAT</shortName>
    </alternativeName>
</protein>
<dbReference type="EC" id="2.7.7.4" evidence="1"/>
<dbReference type="EMBL" id="AE006470">
    <property type="protein sequence ID" value="AAM72098.1"/>
    <property type="molecule type" value="Genomic_DNA"/>
</dbReference>
<dbReference type="RefSeq" id="NP_661756.1">
    <property type="nucleotide sequence ID" value="NC_002932.3"/>
</dbReference>
<dbReference type="RefSeq" id="WP_010932543.1">
    <property type="nucleotide sequence ID" value="NC_002932.3"/>
</dbReference>
<dbReference type="SMR" id="Q8KE30"/>
<dbReference type="STRING" id="194439.CT0862"/>
<dbReference type="EnsemblBacteria" id="AAM72098">
    <property type="protein sequence ID" value="AAM72098"/>
    <property type="gene ID" value="CT0862"/>
</dbReference>
<dbReference type="KEGG" id="cte:CT0862"/>
<dbReference type="PATRIC" id="fig|194439.7.peg.782"/>
<dbReference type="eggNOG" id="COG2046">
    <property type="taxonomic scope" value="Bacteria"/>
</dbReference>
<dbReference type="HOGENOM" id="CLU_022950_1_1_10"/>
<dbReference type="OrthoDB" id="9804504at2"/>
<dbReference type="UniPathway" id="UPA00140">
    <property type="reaction ID" value="UER00204"/>
</dbReference>
<dbReference type="Proteomes" id="UP000001007">
    <property type="component" value="Chromosome"/>
</dbReference>
<dbReference type="GO" id="GO:0005524">
    <property type="term" value="F:ATP binding"/>
    <property type="evidence" value="ECO:0007669"/>
    <property type="project" value="UniProtKB-KW"/>
</dbReference>
<dbReference type="GO" id="GO:0004781">
    <property type="term" value="F:sulfate adenylyltransferase (ATP) activity"/>
    <property type="evidence" value="ECO:0007669"/>
    <property type="project" value="UniProtKB-UniRule"/>
</dbReference>
<dbReference type="GO" id="GO:0070814">
    <property type="term" value="P:hydrogen sulfide biosynthetic process"/>
    <property type="evidence" value="ECO:0007669"/>
    <property type="project" value="UniProtKB-UniRule"/>
</dbReference>
<dbReference type="GO" id="GO:0000103">
    <property type="term" value="P:sulfate assimilation"/>
    <property type="evidence" value="ECO:0007669"/>
    <property type="project" value="UniProtKB-UniRule"/>
</dbReference>
<dbReference type="CDD" id="cd00517">
    <property type="entry name" value="ATPS"/>
    <property type="match status" value="1"/>
</dbReference>
<dbReference type="Gene3D" id="3.40.50.620">
    <property type="entry name" value="HUPs"/>
    <property type="match status" value="1"/>
</dbReference>
<dbReference type="Gene3D" id="3.10.400.10">
    <property type="entry name" value="Sulfate adenylyltransferase"/>
    <property type="match status" value="1"/>
</dbReference>
<dbReference type="HAMAP" id="MF_00066">
    <property type="entry name" value="Sulf_adenylyltr"/>
    <property type="match status" value="1"/>
</dbReference>
<dbReference type="InterPro" id="IPR025980">
    <property type="entry name" value="ATP-Sase_PUA-like_dom"/>
</dbReference>
<dbReference type="InterPro" id="IPR015947">
    <property type="entry name" value="PUA-like_sf"/>
</dbReference>
<dbReference type="InterPro" id="IPR014729">
    <property type="entry name" value="Rossmann-like_a/b/a_fold"/>
</dbReference>
<dbReference type="InterPro" id="IPR020792">
    <property type="entry name" value="SO4_adenylyltransferase_pro"/>
</dbReference>
<dbReference type="InterPro" id="IPR024951">
    <property type="entry name" value="Sulfurylase_cat_dom"/>
</dbReference>
<dbReference type="InterPro" id="IPR002650">
    <property type="entry name" value="Sulphate_adenylyltransferase"/>
</dbReference>
<dbReference type="NCBIfam" id="NF003166">
    <property type="entry name" value="PRK04149.1"/>
    <property type="match status" value="1"/>
</dbReference>
<dbReference type="NCBIfam" id="TIGR00339">
    <property type="entry name" value="sopT"/>
    <property type="match status" value="1"/>
</dbReference>
<dbReference type="PANTHER" id="PTHR43509">
    <property type="match status" value="1"/>
</dbReference>
<dbReference type="PANTHER" id="PTHR43509:SF1">
    <property type="entry name" value="SULFATE ADENYLYLTRANSFERASE"/>
    <property type="match status" value="1"/>
</dbReference>
<dbReference type="Pfam" id="PF01747">
    <property type="entry name" value="ATP-sulfurylase"/>
    <property type="match status" value="1"/>
</dbReference>
<dbReference type="Pfam" id="PF14306">
    <property type="entry name" value="PUA_2"/>
    <property type="match status" value="1"/>
</dbReference>
<dbReference type="SUPFAM" id="SSF52374">
    <property type="entry name" value="Nucleotidylyl transferase"/>
    <property type="match status" value="1"/>
</dbReference>
<dbReference type="SUPFAM" id="SSF88697">
    <property type="entry name" value="PUA domain-like"/>
    <property type="match status" value="1"/>
</dbReference>
<name>SAT_CHLTE</name>
<gene>
    <name evidence="1" type="primary">sat</name>
    <name type="ordered locus">CT0862</name>
</gene>
<feature type="chain" id="PRO_0000340618" description="Sulfate adenylyltransferase">
    <location>
        <begin position="1"/>
        <end position="404"/>
    </location>
</feature>
<organism>
    <name type="scientific">Chlorobaculum tepidum (strain ATCC 49652 / DSM 12025 / NBRC 103806 / TLS)</name>
    <name type="common">Chlorobium tepidum</name>
    <dbReference type="NCBI Taxonomy" id="194439"/>
    <lineage>
        <taxon>Bacteria</taxon>
        <taxon>Pseudomonadati</taxon>
        <taxon>Chlorobiota</taxon>
        <taxon>Chlorobiia</taxon>
        <taxon>Chlorobiales</taxon>
        <taxon>Chlorobiaceae</taxon>
        <taxon>Chlorobaculum</taxon>
    </lineage>
</organism>
<comment type="catalytic activity">
    <reaction evidence="1">
        <text>sulfate + ATP + H(+) = adenosine 5'-phosphosulfate + diphosphate</text>
        <dbReference type="Rhea" id="RHEA:18133"/>
        <dbReference type="ChEBI" id="CHEBI:15378"/>
        <dbReference type="ChEBI" id="CHEBI:16189"/>
        <dbReference type="ChEBI" id="CHEBI:30616"/>
        <dbReference type="ChEBI" id="CHEBI:33019"/>
        <dbReference type="ChEBI" id="CHEBI:58243"/>
        <dbReference type="EC" id="2.7.7.4"/>
    </reaction>
</comment>
<comment type="pathway">
    <text evidence="1">Sulfur metabolism; hydrogen sulfide biosynthesis; sulfite from sulfate: step 1/3.</text>
</comment>
<comment type="similarity">
    <text evidence="1">Belongs to the sulfate adenylyltransferase family.</text>
</comment>
<sequence length="404" mass="45037">MALVNPHGKEKVLKPLLLTGDELVSEKERAKSMKQVRLSSRETGDLIMLGIGGFTPLTGFMGHADWKGSVETCTMADGTFWPIPITLSTSKEQADTIAIGEEVALVDDESGELMGSMKVEEKYCIDKAHECREVFKTDDPAHPGVLMVMNQGDVNLAGPVKVFSEGSFPTEFAGIYMTPAQTRKMFEENGWSTVAAFQTRNPMHRSHEYLVKIAVEICDGVLIHQLLGKLKPGDIPADVRRDCINVLTEKYFVKGTTIQAGYPLDMRYAGPREALLHALFRQNFGCSHLIVGRDHAGVGDYYGPFDAHHIFDQIPEGALETKPLKIDWTFYCYKCDAMASMKTCPHEPADRLNLSGTKLRKMLSEGEEVPEHFSRPEVLEILRRYYAGLTEKVDIKMHSHAIGK</sequence>
<reference key="1">
    <citation type="journal article" date="2002" name="Proc. Natl. Acad. Sci. U.S.A.">
        <title>The complete genome sequence of Chlorobium tepidum TLS, a photosynthetic, anaerobic, green-sulfur bacterium.</title>
        <authorList>
            <person name="Eisen J.A."/>
            <person name="Nelson K.E."/>
            <person name="Paulsen I.T."/>
            <person name="Heidelberg J.F."/>
            <person name="Wu M."/>
            <person name="Dodson R.J."/>
            <person name="DeBoy R.T."/>
            <person name="Gwinn M.L."/>
            <person name="Nelson W.C."/>
            <person name="Haft D.H."/>
            <person name="Hickey E.K."/>
            <person name="Peterson J.D."/>
            <person name="Durkin A.S."/>
            <person name="Kolonay J.F."/>
            <person name="Yang F."/>
            <person name="Holt I.E."/>
            <person name="Umayam L.A."/>
            <person name="Mason T.M."/>
            <person name="Brenner M."/>
            <person name="Shea T.P."/>
            <person name="Parksey D.S."/>
            <person name="Nierman W.C."/>
            <person name="Feldblyum T.V."/>
            <person name="Hansen C.L."/>
            <person name="Craven M.B."/>
            <person name="Radune D."/>
            <person name="Vamathevan J.J."/>
            <person name="Khouri H.M."/>
            <person name="White O."/>
            <person name="Gruber T.M."/>
            <person name="Ketchum K.A."/>
            <person name="Venter J.C."/>
            <person name="Tettelin H."/>
            <person name="Bryant D.A."/>
            <person name="Fraser C.M."/>
        </authorList>
    </citation>
    <scope>NUCLEOTIDE SEQUENCE [LARGE SCALE GENOMIC DNA]</scope>
    <source>
        <strain>ATCC 49652 / DSM 12025 / NBRC 103806 / TLS</strain>
    </source>
</reference>